<evidence type="ECO:0000256" key="1">
    <source>
        <dbReference type="SAM" id="MobiDB-lite"/>
    </source>
</evidence>
<dbReference type="EMBL" id="AF222894">
    <property type="protein sequence ID" value="AAF30437.1"/>
    <property type="molecule type" value="Genomic_DNA"/>
</dbReference>
<dbReference type="RefSeq" id="WP_010891655.1">
    <property type="nucleotide sequence ID" value="NC_002162.1"/>
</dbReference>
<dbReference type="STRING" id="273119.UU032"/>
<dbReference type="EnsemblBacteria" id="AAF30437">
    <property type="protein sequence ID" value="AAF30437"/>
    <property type="gene ID" value="UU032"/>
</dbReference>
<dbReference type="GeneID" id="29672560"/>
<dbReference type="KEGG" id="uur:UU032"/>
<dbReference type="PATRIC" id="fig|273119.6.peg.34"/>
<dbReference type="eggNOG" id="ENOG5033699">
    <property type="taxonomic scope" value="Bacteria"/>
</dbReference>
<dbReference type="HOGENOM" id="CLU_1522492_0_0_14"/>
<dbReference type="OrthoDB" id="3035363at2"/>
<dbReference type="Proteomes" id="UP000000423">
    <property type="component" value="Chromosome"/>
</dbReference>
<protein>
    <recommendedName>
        <fullName>Uncharacterized protein UU032</fullName>
    </recommendedName>
</protein>
<sequence length="175" mass="20950">MSKKINNNKTPRNKVKNNNVSKDNDDIVISLRYENWVKEERVNSLTTYTKDENQFLKNIIYILNTLFPYVYKNWKNKGINDHCHPIKQNNVFSKYIKLIKKLHPNLLKNDNEELELYQLGLGRSVRVICSKIDNILFPLLIDHHHLGYESQSYNDKDTKKYDYCPLRKYNKNQDN</sequence>
<proteinExistence type="predicted"/>
<organism>
    <name type="scientific">Ureaplasma parvum serovar 3 (strain ATCC 700970)</name>
    <dbReference type="NCBI Taxonomy" id="273119"/>
    <lineage>
        <taxon>Bacteria</taxon>
        <taxon>Bacillati</taxon>
        <taxon>Mycoplasmatota</taxon>
        <taxon>Mycoplasmoidales</taxon>
        <taxon>Mycoplasmoidaceae</taxon>
        <taxon>Ureaplasma</taxon>
    </lineage>
</organism>
<feature type="chain" id="PRO_0000220783" description="Uncharacterized protein UU032">
    <location>
        <begin position="1"/>
        <end position="175"/>
    </location>
</feature>
<feature type="region of interest" description="Disordered" evidence="1">
    <location>
        <begin position="1"/>
        <end position="21"/>
    </location>
</feature>
<feature type="compositionally biased region" description="Polar residues" evidence="1">
    <location>
        <begin position="1"/>
        <end position="10"/>
    </location>
</feature>
<keyword id="KW-1185">Reference proteome</keyword>
<reference key="1">
    <citation type="journal article" date="2000" name="Nature">
        <title>The complete sequence of the mucosal pathogen Ureaplasma urealyticum.</title>
        <authorList>
            <person name="Glass J.I."/>
            <person name="Lefkowitz E.J."/>
            <person name="Glass J.S."/>
            <person name="Heiner C.R."/>
            <person name="Chen E.Y."/>
            <person name="Cassell G.H."/>
        </authorList>
    </citation>
    <scope>NUCLEOTIDE SEQUENCE [LARGE SCALE GENOMIC DNA]</scope>
    <source>
        <strain>ATCC 700970</strain>
    </source>
</reference>
<accession>Q9PRB3</accession>
<name>Y032_UREPA</name>
<gene>
    <name type="ordered locus">UU032</name>
</gene>